<gene>
    <name evidence="1" type="primary">rho</name>
    <name type="ordered locus">Z5293</name>
    <name type="ordered locus">ECs4716</name>
</gene>
<keyword id="KW-0067">ATP-binding</keyword>
<keyword id="KW-0347">Helicase</keyword>
<keyword id="KW-0378">Hydrolase</keyword>
<keyword id="KW-0547">Nucleotide-binding</keyword>
<keyword id="KW-1185">Reference proteome</keyword>
<keyword id="KW-0694">RNA-binding</keyword>
<keyword id="KW-0804">Transcription</keyword>
<keyword id="KW-0805">Transcription regulation</keyword>
<keyword id="KW-0806">Transcription termination</keyword>
<accession>P0AG32</accession>
<accession>P03002</accession>
<accession>Q48357</accession>
<feature type="chain" id="PRO_0000188963" description="Transcription termination factor Rho">
    <location>
        <begin position="1"/>
        <end position="419"/>
    </location>
</feature>
<feature type="domain" description="Rho RNA-BD" evidence="2">
    <location>
        <begin position="48"/>
        <end position="123"/>
    </location>
</feature>
<feature type="region of interest" description="RNA-binding 1" evidence="1">
    <location>
        <begin position="61"/>
        <end position="66"/>
    </location>
</feature>
<feature type="region of interest" description="RNA-binding 1" evidence="1">
    <location>
        <begin position="78"/>
        <end position="80"/>
    </location>
</feature>
<feature type="region of interest" description="RNA-binding 1" evidence="1">
    <location>
        <begin position="108"/>
        <end position="110"/>
    </location>
</feature>
<feature type="region of interest" description="RNA-binding 2" evidence="1">
    <location>
        <begin position="284"/>
        <end position="288"/>
    </location>
</feature>
<feature type="binding site" evidence="1">
    <location>
        <begin position="169"/>
        <end position="174"/>
    </location>
    <ligand>
        <name>ATP</name>
        <dbReference type="ChEBI" id="CHEBI:30616"/>
    </ligand>
</feature>
<feature type="binding site" evidence="1">
    <location>
        <begin position="181"/>
        <end position="186"/>
    </location>
    <ligand>
        <name>ATP</name>
        <dbReference type="ChEBI" id="CHEBI:30616"/>
    </ligand>
</feature>
<feature type="binding site" evidence="1">
    <location>
        <position position="212"/>
    </location>
    <ligand>
        <name>ATP</name>
        <dbReference type="ChEBI" id="CHEBI:30616"/>
    </ligand>
</feature>
<feature type="site" description="RNA-binding 2" evidence="1">
    <location>
        <position position="326"/>
    </location>
</feature>
<evidence type="ECO:0000255" key="1">
    <source>
        <dbReference type="HAMAP-Rule" id="MF_01884"/>
    </source>
</evidence>
<evidence type="ECO:0000255" key="2">
    <source>
        <dbReference type="PROSITE-ProRule" id="PRU01203"/>
    </source>
</evidence>
<comment type="function">
    <text evidence="1">Facilitates transcription termination by a mechanism that involves Rho binding to the nascent RNA, activation of Rho's RNA-dependent ATPase activity, and release of the mRNA from the DNA template.</text>
</comment>
<comment type="subunit">
    <text evidence="1">Homohexamer. The homohexamer assembles into an open ring structure.</text>
</comment>
<comment type="similarity">
    <text evidence="1">Belongs to the Rho family.</text>
</comment>
<protein>
    <recommendedName>
        <fullName evidence="1">Transcription termination factor Rho</fullName>
        <ecNumber evidence="1">3.6.4.-</ecNumber>
    </recommendedName>
    <alternativeName>
        <fullName evidence="1">ATP-dependent helicase Rho</fullName>
    </alternativeName>
</protein>
<sequence length="419" mass="47004">MNLTELKNTPVSELITLGENMGLENLARMRKQDIIFAILKQHAKSGEDIFGDGVLEILQDGFGFLRSADSSYLAGPDDIYVSPSQIRRFNLRTGDTISGKIRPPKEGERYFALLKVNEVNFDKPENARNKILFENLTPLHANSRLRMERGNGSTEDLTARVLDLASPIGRGQRGLIVAPPKAGKTMLLQNIAQSIAYNHPDCVLMVLLIDERPEEVTEMQRLVKGEVVASTFDEPASRHVQVAEMVIEKAKRLVEHKKDVIILLDSITRLARAYNTVVPASGKVLTGGVDANALHRPKRFFGAARNVEEGGSLTIIATALIDTGSKMDEVIYEEFKGTGNMELHLSRKIAEKRVFPAIDYNRSGTRKEELLTTQEELQKMWILRKIIHPMGEIDAMEFLINKLAMTKTNDDFFEMMKRS</sequence>
<organism>
    <name type="scientific">Escherichia coli O157:H7</name>
    <dbReference type="NCBI Taxonomy" id="83334"/>
    <lineage>
        <taxon>Bacteria</taxon>
        <taxon>Pseudomonadati</taxon>
        <taxon>Pseudomonadota</taxon>
        <taxon>Gammaproteobacteria</taxon>
        <taxon>Enterobacterales</taxon>
        <taxon>Enterobacteriaceae</taxon>
        <taxon>Escherichia</taxon>
    </lineage>
</organism>
<reference key="1">
    <citation type="journal article" date="2001" name="Nature">
        <title>Genome sequence of enterohaemorrhagic Escherichia coli O157:H7.</title>
        <authorList>
            <person name="Perna N.T."/>
            <person name="Plunkett G. III"/>
            <person name="Burland V."/>
            <person name="Mau B."/>
            <person name="Glasner J.D."/>
            <person name="Rose D.J."/>
            <person name="Mayhew G.F."/>
            <person name="Evans P.S."/>
            <person name="Gregor J."/>
            <person name="Kirkpatrick H.A."/>
            <person name="Posfai G."/>
            <person name="Hackett J."/>
            <person name="Klink S."/>
            <person name="Boutin A."/>
            <person name="Shao Y."/>
            <person name="Miller L."/>
            <person name="Grotbeck E.J."/>
            <person name="Davis N.W."/>
            <person name="Lim A."/>
            <person name="Dimalanta E.T."/>
            <person name="Potamousis K."/>
            <person name="Apodaca J."/>
            <person name="Anantharaman T.S."/>
            <person name="Lin J."/>
            <person name="Yen G."/>
            <person name="Schwartz D.C."/>
            <person name="Welch R.A."/>
            <person name="Blattner F.R."/>
        </authorList>
    </citation>
    <scope>NUCLEOTIDE SEQUENCE [LARGE SCALE GENOMIC DNA]</scope>
    <source>
        <strain>O157:H7 / EDL933 / ATCC 700927 / EHEC</strain>
    </source>
</reference>
<reference key="2">
    <citation type="journal article" date="2001" name="DNA Res.">
        <title>Complete genome sequence of enterohemorrhagic Escherichia coli O157:H7 and genomic comparison with a laboratory strain K-12.</title>
        <authorList>
            <person name="Hayashi T."/>
            <person name="Makino K."/>
            <person name="Ohnishi M."/>
            <person name="Kurokawa K."/>
            <person name="Ishii K."/>
            <person name="Yokoyama K."/>
            <person name="Han C.-G."/>
            <person name="Ohtsubo E."/>
            <person name="Nakayama K."/>
            <person name="Murata T."/>
            <person name="Tanaka M."/>
            <person name="Tobe T."/>
            <person name="Iida T."/>
            <person name="Takami H."/>
            <person name="Honda T."/>
            <person name="Sasakawa C."/>
            <person name="Ogasawara N."/>
            <person name="Yasunaga T."/>
            <person name="Kuhara S."/>
            <person name="Shiba T."/>
            <person name="Hattori M."/>
            <person name="Shinagawa H."/>
        </authorList>
    </citation>
    <scope>NUCLEOTIDE SEQUENCE [LARGE SCALE GENOMIC DNA]</scope>
    <source>
        <strain>O157:H7 / Sakai / RIMD 0509952 / EHEC</strain>
    </source>
</reference>
<dbReference type="EC" id="3.6.4.-" evidence="1"/>
<dbReference type="EMBL" id="AE005174">
    <property type="protein sequence ID" value="AAG58977.1"/>
    <property type="molecule type" value="Genomic_DNA"/>
</dbReference>
<dbReference type="EMBL" id="BA000007">
    <property type="protein sequence ID" value="BAB38139.1"/>
    <property type="molecule type" value="Genomic_DNA"/>
</dbReference>
<dbReference type="PIR" id="D91218">
    <property type="entry name" value="D91218"/>
</dbReference>
<dbReference type="RefSeq" id="NP_312743.1">
    <property type="nucleotide sequence ID" value="NC_002695.1"/>
</dbReference>
<dbReference type="RefSeq" id="WP_001054527.1">
    <property type="nucleotide sequence ID" value="NZ_VOAI01000017.1"/>
</dbReference>
<dbReference type="SMR" id="P0AG32"/>
<dbReference type="STRING" id="155864.Z5293"/>
<dbReference type="GeneID" id="915249"/>
<dbReference type="GeneID" id="93778161"/>
<dbReference type="KEGG" id="ece:Z5293"/>
<dbReference type="KEGG" id="ecs:ECs_4716"/>
<dbReference type="PATRIC" id="fig|386585.9.peg.4919"/>
<dbReference type="eggNOG" id="COG1158">
    <property type="taxonomic scope" value="Bacteria"/>
</dbReference>
<dbReference type="HOGENOM" id="CLU_016377_4_3_6"/>
<dbReference type="OMA" id="LCRAHNN"/>
<dbReference type="Proteomes" id="UP000000558">
    <property type="component" value="Chromosome"/>
</dbReference>
<dbReference type="Proteomes" id="UP000002519">
    <property type="component" value="Chromosome"/>
</dbReference>
<dbReference type="GO" id="GO:0005829">
    <property type="term" value="C:cytosol"/>
    <property type="evidence" value="ECO:0007669"/>
    <property type="project" value="UniProtKB-ARBA"/>
</dbReference>
<dbReference type="GO" id="GO:0005524">
    <property type="term" value="F:ATP binding"/>
    <property type="evidence" value="ECO:0007669"/>
    <property type="project" value="UniProtKB-UniRule"/>
</dbReference>
<dbReference type="GO" id="GO:0016887">
    <property type="term" value="F:ATP hydrolysis activity"/>
    <property type="evidence" value="ECO:0007669"/>
    <property type="project" value="InterPro"/>
</dbReference>
<dbReference type="GO" id="GO:0008186">
    <property type="term" value="F:ATP-dependent activity, acting on RNA"/>
    <property type="evidence" value="ECO:0007669"/>
    <property type="project" value="InterPro"/>
</dbReference>
<dbReference type="GO" id="GO:0004386">
    <property type="term" value="F:helicase activity"/>
    <property type="evidence" value="ECO:0007669"/>
    <property type="project" value="UniProtKB-UniRule"/>
</dbReference>
<dbReference type="GO" id="GO:0003723">
    <property type="term" value="F:RNA binding"/>
    <property type="evidence" value="ECO:0007669"/>
    <property type="project" value="UniProtKB-UniRule"/>
</dbReference>
<dbReference type="GO" id="GO:0006353">
    <property type="term" value="P:DNA-templated transcription termination"/>
    <property type="evidence" value="ECO:0007669"/>
    <property type="project" value="UniProtKB-UniRule"/>
</dbReference>
<dbReference type="CDD" id="cd04459">
    <property type="entry name" value="Rho_CSD"/>
    <property type="match status" value="1"/>
</dbReference>
<dbReference type="CDD" id="cd01128">
    <property type="entry name" value="rho_factor_C"/>
    <property type="match status" value="1"/>
</dbReference>
<dbReference type="FunFam" id="1.10.720.10:FF:000001">
    <property type="entry name" value="Transcription termination factor Rho"/>
    <property type="match status" value="1"/>
</dbReference>
<dbReference type="FunFam" id="2.40.50.140:FF:000010">
    <property type="entry name" value="Transcription termination factor Rho"/>
    <property type="match status" value="1"/>
</dbReference>
<dbReference type="FunFam" id="3.40.50.300:FF:000072">
    <property type="entry name" value="Transcription termination factor Rho"/>
    <property type="match status" value="1"/>
</dbReference>
<dbReference type="Gene3D" id="1.10.720.10">
    <property type="match status" value="1"/>
</dbReference>
<dbReference type="Gene3D" id="2.40.50.140">
    <property type="entry name" value="Nucleic acid-binding proteins"/>
    <property type="match status" value="1"/>
</dbReference>
<dbReference type="Gene3D" id="3.40.50.300">
    <property type="entry name" value="P-loop containing nucleotide triphosphate hydrolases"/>
    <property type="match status" value="1"/>
</dbReference>
<dbReference type="HAMAP" id="MF_01884">
    <property type="entry name" value="Rho"/>
    <property type="match status" value="1"/>
</dbReference>
<dbReference type="InterPro" id="IPR003593">
    <property type="entry name" value="AAA+_ATPase"/>
</dbReference>
<dbReference type="InterPro" id="IPR000194">
    <property type="entry name" value="ATPase_F1/V1/A1_a/bsu_nucl-bd"/>
</dbReference>
<dbReference type="InterPro" id="IPR011129">
    <property type="entry name" value="CSD"/>
</dbReference>
<dbReference type="InterPro" id="IPR012340">
    <property type="entry name" value="NA-bd_OB-fold"/>
</dbReference>
<dbReference type="InterPro" id="IPR027417">
    <property type="entry name" value="P-loop_NTPase"/>
</dbReference>
<dbReference type="InterPro" id="IPR011112">
    <property type="entry name" value="Rho-like_N"/>
</dbReference>
<dbReference type="InterPro" id="IPR041703">
    <property type="entry name" value="Rho_factor_ATP-bd"/>
</dbReference>
<dbReference type="InterPro" id="IPR036269">
    <property type="entry name" value="Rho_N_sf"/>
</dbReference>
<dbReference type="InterPro" id="IPR011113">
    <property type="entry name" value="Rho_RNA-bd"/>
</dbReference>
<dbReference type="InterPro" id="IPR004665">
    <property type="entry name" value="Term_rho"/>
</dbReference>
<dbReference type="NCBIfam" id="NF006886">
    <property type="entry name" value="PRK09376.1"/>
    <property type="match status" value="1"/>
</dbReference>
<dbReference type="NCBIfam" id="TIGR00767">
    <property type="entry name" value="rho"/>
    <property type="match status" value="1"/>
</dbReference>
<dbReference type="PANTHER" id="PTHR46425">
    <property type="entry name" value="TRANSCRIPTION TERMINATION FACTOR RHO"/>
    <property type="match status" value="1"/>
</dbReference>
<dbReference type="PANTHER" id="PTHR46425:SF1">
    <property type="entry name" value="TRANSCRIPTION TERMINATION FACTOR RHO"/>
    <property type="match status" value="1"/>
</dbReference>
<dbReference type="Pfam" id="PF00006">
    <property type="entry name" value="ATP-synt_ab"/>
    <property type="match status" value="1"/>
</dbReference>
<dbReference type="Pfam" id="PF07498">
    <property type="entry name" value="Rho_N"/>
    <property type="match status" value="1"/>
</dbReference>
<dbReference type="Pfam" id="PF07497">
    <property type="entry name" value="Rho_RNA_bind"/>
    <property type="match status" value="1"/>
</dbReference>
<dbReference type="SMART" id="SM00382">
    <property type="entry name" value="AAA"/>
    <property type="match status" value="1"/>
</dbReference>
<dbReference type="SMART" id="SM00357">
    <property type="entry name" value="CSP"/>
    <property type="match status" value="1"/>
</dbReference>
<dbReference type="SMART" id="SM00959">
    <property type="entry name" value="Rho_N"/>
    <property type="match status" value="1"/>
</dbReference>
<dbReference type="SUPFAM" id="SSF50249">
    <property type="entry name" value="Nucleic acid-binding proteins"/>
    <property type="match status" value="1"/>
</dbReference>
<dbReference type="SUPFAM" id="SSF52540">
    <property type="entry name" value="P-loop containing nucleoside triphosphate hydrolases"/>
    <property type="match status" value="1"/>
</dbReference>
<dbReference type="SUPFAM" id="SSF68912">
    <property type="entry name" value="Rho N-terminal domain-like"/>
    <property type="match status" value="1"/>
</dbReference>
<dbReference type="PROSITE" id="PS51856">
    <property type="entry name" value="RHO_RNA_BD"/>
    <property type="match status" value="1"/>
</dbReference>
<proteinExistence type="inferred from homology"/>
<name>RHO_ECO57</name>